<comment type="function">
    <text evidence="1">Involved in the binding of tRNA to the ribosomes.</text>
</comment>
<comment type="subunit">
    <text evidence="1">Part of the 30S ribosomal subunit.</text>
</comment>
<comment type="similarity">
    <text evidence="1">Belongs to the universal ribosomal protein uS10 family.</text>
</comment>
<proteinExistence type="inferred from homology"/>
<name>RS10_ESCF3</name>
<accession>B7LS41</accession>
<dbReference type="EMBL" id="CU928158">
    <property type="protein sequence ID" value="CAQ90784.1"/>
    <property type="molecule type" value="Genomic_DNA"/>
</dbReference>
<dbReference type="RefSeq" id="WP_001181005.1">
    <property type="nucleotide sequence ID" value="NC_011740.1"/>
</dbReference>
<dbReference type="SMR" id="B7LS41"/>
<dbReference type="GeneID" id="98390443"/>
<dbReference type="KEGG" id="efe:EFER_3304"/>
<dbReference type="HOGENOM" id="CLU_122625_1_3_6"/>
<dbReference type="OrthoDB" id="9804464at2"/>
<dbReference type="Proteomes" id="UP000000745">
    <property type="component" value="Chromosome"/>
</dbReference>
<dbReference type="GO" id="GO:1990904">
    <property type="term" value="C:ribonucleoprotein complex"/>
    <property type="evidence" value="ECO:0007669"/>
    <property type="project" value="UniProtKB-KW"/>
</dbReference>
<dbReference type="GO" id="GO:0005840">
    <property type="term" value="C:ribosome"/>
    <property type="evidence" value="ECO:0007669"/>
    <property type="project" value="UniProtKB-KW"/>
</dbReference>
<dbReference type="GO" id="GO:0003735">
    <property type="term" value="F:structural constituent of ribosome"/>
    <property type="evidence" value="ECO:0007669"/>
    <property type="project" value="InterPro"/>
</dbReference>
<dbReference type="GO" id="GO:0000049">
    <property type="term" value="F:tRNA binding"/>
    <property type="evidence" value="ECO:0007669"/>
    <property type="project" value="UniProtKB-UniRule"/>
</dbReference>
<dbReference type="GO" id="GO:0006412">
    <property type="term" value="P:translation"/>
    <property type="evidence" value="ECO:0007669"/>
    <property type="project" value="UniProtKB-UniRule"/>
</dbReference>
<dbReference type="FunFam" id="3.30.70.600:FF:000001">
    <property type="entry name" value="30S ribosomal protein S10"/>
    <property type="match status" value="1"/>
</dbReference>
<dbReference type="Gene3D" id="3.30.70.600">
    <property type="entry name" value="Ribosomal protein S10 domain"/>
    <property type="match status" value="1"/>
</dbReference>
<dbReference type="HAMAP" id="MF_00508">
    <property type="entry name" value="Ribosomal_uS10"/>
    <property type="match status" value="1"/>
</dbReference>
<dbReference type="InterPro" id="IPR001848">
    <property type="entry name" value="Ribosomal_uS10"/>
</dbReference>
<dbReference type="InterPro" id="IPR018268">
    <property type="entry name" value="Ribosomal_uS10_CS"/>
</dbReference>
<dbReference type="InterPro" id="IPR027486">
    <property type="entry name" value="Ribosomal_uS10_dom"/>
</dbReference>
<dbReference type="InterPro" id="IPR036838">
    <property type="entry name" value="Ribosomal_uS10_dom_sf"/>
</dbReference>
<dbReference type="NCBIfam" id="NF001861">
    <property type="entry name" value="PRK00596.1"/>
    <property type="match status" value="1"/>
</dbReference>
<dbReference type="NCBIfam" id="TIGR01049">
    <property type="entry name" value="rpsJ_bact"/>
    <property type="match status" value="1"/>
</dbReference>
<dbReference type="PANTHER" id="PTHR11700">
    <property type="entry name" value="30S RIBOSOMAL PROTEIN S10 FAMILY MEMBER"/>
    <property type="match status" value="1"/>
</dbReference>
<dbReference type="Pfam" id="PF00338">
    <property type="entry name" value="Ribosomal_S10"/>
    <property type="match status" value="1"/>
</dbReference>
<dbReference type="PRINTS" id="PR00971">
    <property type="entry name" value="RIBOSOMALS10"/>
</dbReference>
<dbReference type="SMART" id="SM01403">
    <property type="entry name" value="Ribosomal_S10"/>
    <property type="match status" value="1"/>
</dbReference>
<dbReference type="SUPFAM" id="SSF54999">
    <property type="entry name" value="Ribosomal protein S10"/>
    <property type="match status" value="1"/>
</dbReference>
<dbReference type="PROSITE" id="PS00361">
    <property type="entry name" value="RIBOSOMAL_S10"/>
    <property type="match status" value="1"/>
</dbReference>
<keyword id="KW-0687">Ribonucleoprotein</keyword>
<keyword id="KW-0689">Ribosomal protein</keyword>
<gene>
    <name evidence="1" type="primary">rpsJ</name>
    <name type="ordered locus">EFER_3304</name>
</gene>
<protein>
    <recommendedName>
        <fullName evidence="1">Small ribosomal subunit protein uS10</fullName>
    </recommendedName>
    <alternativeName>
        <fullName evidence="2">30S ribosomal protein S10</fullName>
    </alternativeName>
</protein>
<evidence type="ECO:0000255" key="1">
    <source>
        <dbReference type="HAMAP-Rule" id="MF_00508"/>
    </source>
</evidence>
<evidence type="ECO:0000305" key="2"/>
<organism>
    <name type="scientific">Escherichia fergusonii (strain ATCC 35469 / DSM 13698 / CCUG 18766 / IAM 14443 / JCM 21226 / LMG 7866 / NBRC 102419 / NCTC 12128 / CDC 0568-73)</name>
    <dbReference type="NCBI Taxonomy" id="585054"/>
    <lineage>
        <taxon>Bacteria</taxon>
        <taxon>Pseudomonadati</taxon>
        <taxon>Pseudomonadota</taxon>
        <taxon>Gammaproteobacteria</taxon>
        <taxon>Enterobacterales</taxon>
        <taxon>Enterobacteriaceae</taxon>
        <taxon>Escherichia</taxon>
    </lineage>
</organism>
<feature type="chain" id="PRO_1000127125" description="Small ribosomal subunit protein uS10">
    <location>
        <begin position="1"/>
        <end position="103"/>
    </location>
</feature>
<sequence length="103" mass="11767">MQNQRIRIRLKAFDHRLIDQSTAEIVETAKRTGAQVRGPIPLPTRKERFTVLISPHVNKDARDQYEIRTHKRLVDIVEPTEKTVDALMRLDLAAGVDVQISLG</sequence>
<reference key="1">
    <citation type="journal article" date="2009" name="PLoS Genet.">
        <title>Organised genome dynamics in the Escherichia coli species results in highly diverse adaptive paths.</title>
        <authorList>
            <person name="Touchon M."/>
            <person name="Hoede C."/>
            <person name="Tenaillon O."/>
            <person name="Barbe V."/>
            <person name="Baeriswyl S."/>
            <person name="Bidet P."/>
            <person name="Bingen E."/>
            <person name="Bonacorsi S."/>
            <person name="Bouchier C."/>
            <person name="Bouvet O."/>
            <person name="Calteau A."/>
            <person name="Chiapello H."/>
            <person name="Clermont O."/>
            <person name="Cruveiller S."/>
            <person name="Danchin A."/>
            <person name="Diard M."/>
            <person name="Dossat C."/>
            <person name="Karoui M.E."/>
            <person name="Frapy E."/>
            <person name="Garry L."/>
            <person name="Ghigo J.M."/>
            <person name="Gilles A.M."/>
            <person name="Johnson J."/>
            <person name="Le Bouguenec C."/>
            <person name="Lescat M."/>
            <person name="Mangenot S."/>
            <person name="Martinez-Jehanne V."/>
            <person name="Matic I."/>
            <person name="Nassif X."/>
            <person name="Oztas S."/>
            <person name="Petit M.A."/>
            <person name="Pichon C."/>
            <person name="Rouy Z."/>
            <person name="Ruf C.S."/>
            <person name="Schneider D."/>
            <person name="Tourret J."/>
            <person name="Vacherie B."/>
            <person name="Vallenet D."/>
            <person name="Medigue C."/>
            <person name="Rocha E.P.C."/>
            <person name="Denamur E."/>
        </authorList>
    </citation>
    <scope>NUCLEOTIDE SEQUENCE [LARGE SCALE GENOMIC DNA]</scope>
    <source>
        <strain>ATCC 35469 / DSM 13698 / BCRC 15582 / CCUG 18766 / IAM 14443 / JCM 21226 / LMG 7866 / NBRC 102419 / NCTC 12128 / CDC 0568-73</strain>
    </source>
</reference>